<keyword id="KW-0963">Cytoplasm</keyword>
<keyword id="KW-0460">Magnesium</keyword>
<keyword id="KW-0479">Metal-binding</keyword>
<keyword id="KW-0548">Nucleotidyltransferase</keyword>
<keyword id="KW-1185">Reference proteome</keyword>
<keyword id="KW-0694">RNA-binding</keyword>
<keyword id="KW-0808">Transferase</keyword>
<evidence type="ECO:0000255" key="1">
    <source>
        <dbReference type="HAMAP-Rule" id="MF_01595"/>
    </source>
</evidence>
<name>PNP_PERMH</name>
<proteinExistence type="inferred from homology"/>
<organism>
    <name type="scientific">Persephonella marina (strain DSM 14350 / EX-H1)</name>
    <dbReference type="NCBI Taxonomy" id="123214"/>
    <lineage>
        <taxon>Bacteria</taxon>
        <taxon>Pseudomonadati</taxon>
        <taxon>Aquificota</taxon>
        <taxon>Aquificia</taxon>
        <taxon>Aquificales</taxon>
        <taxon>Hydrogenothermaceae</taxon>
        <taxon>Persephonella</taxon>
    </lineage>
</organism>
<comment type="function">
    <text evidence="1">Involved in mRNA degradation. Catalyzes the phosphorolysis of single-stranded polyribonucleotides processively in the 3'- to 5'-direction.</text>
</comment>
<comment type="catalytic activity">
    <reaction evidence="1">
        <text>RNA(n+1) + phosphate = RNA(n) + a ribonucleoside 5'-diphosphate</text>
        <dbReference type="Rhea" id="RHEA:22096"/>
        <dbReference type="Rhea" id="RHEA-COMP:14527"/>
        <dbReference type="Rhea" id="RHEA-COMP:17342"/>
        <dbReference type="ChEBI" id="CHEBI:43474"/>
        <dbReference type="ChEBI" id="CHEBI:57930"/>
        <dbReference type="ChEBI" id="CHEBI:140395"/>
        <dbReference type="EC" id="2.7.7.8"/>
    </reaction>
</comment>
<comment type="cofactor">
    <cofactor evidence="1">
        <name>Mg(2+)</name>
        <dbReference type="ChEBI" id="CHEBI:18420"/>
    </cofactor>
</comment>
<comment type="subcellular location">
    <subcellularLocation>
        <location evidence="1">Cytoplasm</location>
    </subcellularLocation>
</comment>
<comment type="similarity">
    <text evidence="1">Belongs to the polyribonucleotide nucleotidyltransferase family.</text>
</comment>
<gene>
    <name evidence="1" type="primary">pnp</name>
    <name type="ordered locus">PERMA_0242</name>
</gene>
<protein>
    <recommendedName>
        <fullName evidence="1">Polyribonucleotide nucleotidyltransferase</fullName>
        <ecNumber evidence="1">2.7.7.8</ecNumber>
    </recommendedName>
    <alternativeName>
        <fullName evidence="1">Polynucleotide phosphorylase</fullName>
        <shortName evidence="1">PNPase</shortName>
    </alternativeName>
</protein>
<feature type="chain" id="PRO_0000381909" description="Polyribonucleotide nucleotidyltransferase">
    <location>
        <begin position="1"/>
        <end position="709"/>
    </location>
</feature>
<feature type="domain" description="KH" evidence="1">
    <location>
        <begin position="557"/>
        <end position="616"/>
    </location>
</feature>
<feature type="domain" description="S1 motif" evidence="1">
    <location>
        <begin position="626"/>
        <end position="694"/>
    </location>
</feature>
<feature type="binding site" evidence="1">
    <location>
        <position position="490"/>
    </location>
    <ligand>
        <name>Mg(2+)</name>
        <dbReference type="ChEBI" id="CHEBI:18420"/>
    </ligand>
</feature>
<feature type="binding site" evidence="1">
    <location>
        <position position="496"/>
    </location>
    <ligand>
        <name>Mg(2+)</name>
        <dbReference type="ChEBI" id="CHEBI:18420"/>
    </ligand>
</feature>
<reference key="1">
    <citation type="journal article" date="2009" name="J. Bacteriol.">
        <title>Complete and draft genome sequences of six members of the Aquificales.</title>
        <authorList>
            <person name="Reysenbach A.-L."/>
            <person name="Hamamura N."/>
            <person name="Podar M."/>
            <person name="Griffiths E."/>
            <person name="Ferreira S."/>
            <person name="Hochstein R."/>
            <person name="Heidelberg J."/>
            <person name="Johnson J."/>
            <person name="Mead D."/>
            <person name="Pohorille A."/>
            <person name="Sarmiento M."/>
            <person name="Schweighofer K."/>
            <person name="Seshadri R."/>
            <person name="Voytek M.A."/>
        </authorList>
    </citation>
    <scope>NUCLEOTIDE SEQUENCE [LARGE SCALE GENOMIC DNA]</scope>
    <source>
        <strain>DSM 14350 / EX-H1</strain>
    </source>
</reference>
<accession>C0QTM3</accession>
<dbReference type="EC" id="2.7.7.8" evidence="1"/>
<dbReference type="EMBL" id="CP001230">
    <property type="protein sequence ID" value="ACO04247.1"/>
    <property type="molecule type" value="Genomic_DNA"/>
</dbReference>
<dbReference type="RefSeq" id="WP_012676485.1">
    <property type="nucleotide sequence ID" value="NC_012440.1"/>
</dbReference>
<dbReference type="SMR" id="C0QTM3"/>
<dbReference type="STRING" id="123214.PERMA_0242"/>
<dbReference type="PaxDb" id="123214-PERMA_0242"/>
<dbReference type="KEGG" id="pmx:PERMA_0242"/>
<dbReference type="eggNOG" id="COG1185">
    <property type="taxonomic scope" value="Bacteria"/>
</dbReference>
<dbReference type="HOGENOM" id="CLU_004217_2_2_0"/>
<dbReference type="OrthoDB" id="9804305at2"/>
<dbReference type="Proteomes" id="UP000001366">
    <property type="component" value="Chromosome"/>
</dbReference>
<dbReference type="GO" id="GO:0005829">
    <property type="term" value="C:cytosol"/>
    <property type="evidence" value="ECO:0007669"/>
    <property type="project" value="TreeGrafter"/>
</dbReference>
<dbReference type="GO" id="GO:0000175">
    <property type="term" value="F:3'-5'-RNA exonuclease activity"/>
    <property type="evidence" value="ECO:0007669"/>
    <property type="project" value="TreeGrafter"/>
</dbReference>
<dbReference type="GO" id="GO:0000287">
    <property type="term" value="F:magnesium ion binding"/>
    <property type="evidence" value="ECO:0007669"/>
    <property type="project" value="UniProtKB-UniRule"/>
</dbReference>
<dbReference type="GO" id="GO:0004654">
    <property type="term" value="F:polyribonucleotide nucleotidyltransferase activity"/>
    <property type="evidence" value="ECO:0007669"/>
    <property type="project" value="UniProtKB-UniRule"/>
</dbReference>
<dbReference type="GO" id="GO:0003723">
    <property type="term" value="F:RNA binding"/>
    <property type="evidence" value="ECO:0007669"/>
    <property type="project" value="UniProtKB-UniRule"/>
</dbReference>
<dbReference type="GO" id="GO:0006402">
    <property type="term" value="P:mRNA catabolic process"/>
    <property type="evidence" value="ECO:0007669"/>
    <property type="project" value="UniProtKB-UniRule"/>
</dbReference>
<dbReference type="GO" id="GO:0006396">
    <property type="term" value="P:RNA processing"/>
    <property type="evidence" value="ECO:0007669"/>
    <property type="project" value="InterPro"/>
</dbReference>
<dbReference type="CDD" id="cd02393">
    <property type="entry name" value="KH-I_PNPase"/>
    <property type="match status" value="1"/>
</dbReference>
<dbReference type="CDD" id="cd11363">
    <property type="entry name" value="RNase_PH_PNPase_1"/>
    <property type="match status" value="1"/>
</dbReference>
<dbReference type="CDD" id="cd11364">
    <property type="entry name" value="RNase_PH_PNPase_2"/>
    <property type="match status" value="1"/>
</dbReference>
<dbReference type="FunFam" id="3.30.1370.10:FF:000001">
    <property type="entry name" value="Polyribonucleotide nucleotidyltransferase"/>
    <property type="match status" value="1"/>
</dbReference>
<dbReference type="FunFam" id="3.30.230.70:FF:000001">
    <property type="entry name" value="Polyribonucleotide nucleotidyltransferase"/>
    <property type="match status" value="1"/>
</dbReference>
<dbReference type="FunFam" id="3.30.230.70:FF:000002">
    <property type="entry name" value="Polyribonucleotide nucleotidyltransferase"/>
    <property type="match status" value="1"/>
</dbReference>
<dbReference type="FunFam" id="2.40.50.140:FF:000189">
    <property type="entry name" value="Polyribonucleotide nucleotidyltransferase, putative"/>
    <property type="match status" value="1"/>
</dbReference>
<dbReference type="Gene3D" id="3.30.230.70">
    <property type="entry name" value="GHMP Kinase, N-terminal domain"/>
    <property type="match status" value="2"/>
</dbReference>
<dbReference type="Gene3D" id="3.30.1370.10">
    <property type="entry name" value="K Homology domain, type 1"/>
    <property type="match status" value="1"/>
</dbReference>
<dbReference type="Gene3D" id="2.40.50.140">
    <property type="entry name" value="Nucleic acid-binding proteins"/>
    <property type="match status" value="1"/>
</dbReference>
<dbReference type="HAMAP" id="MF_01595">
    <property type="entry name" value="PNPase"/>
    <property type="match status" value="1"/>
</dbReference>
<dbReference type="InterPro" id="IPR001247">
    <property type="entry name" value="ExoRNase_PH_dom1"/>
</dbReference>
<dbReference type="InterPro" id="IPR015847">
    <property type="entry name" value="ExoRNase_PH_dom2"/>
</dbReference>
<dbReference type="InterPro" id="IPR036345">
    <property type="entry name" value="ExoRNase_PH_dom2_sf"/>
</dbReference>
<dbReference type="InterPro" id="IPR004087">
    <property type="entry name" value="KH_dom"/>
</dbReference>
<dbReference type="InterPro" id="IPR004088">
    <property type="entry name" value="KH_dom_type_1"/>
</dbReference>
<dbReference type="InterPro" id="IPR036612">
    <property type="entry name" value="KH_dom_type_1_sf"/>
</dbReference>
<dbReference type="InterPro" id="IPR012340">
    <property type="entry name" value="NA-bd_OB-fold"/>
</dbReference>
<dbReference type="InterPro" id="IPR012162">
    <property type="entry name" value="PNPase"/>
</dbReference>
<dbReference type="InterPro" id="IPR027408">
    <property type="entry name" value="PNPase/RNase_PH_dom_sf"/>
</dbReference>
<dbReference type="InterPro" id="IPR015848">
    <property type="entry name" value="PNPase_PH_RNA-bd_bac/org-type"/>
</dbReference>
<dbReference type="InterPro" id="IPR036456">
    <property type="entry name" value="PNPase_PH_RNA-bd_sf"/>
</dbReference>
<dbReference type="InterPro" id="IPR020568">
    <property type="entry name" value="Ribosomal_Su5_D2-typ_SF"/>
</dbReference>
<dbReference type="InterPro" id="IPR003029">
    <property type="entry name" value="S1_domain"/>
</dbReference>
<dbReference type="NCBIfam" id="TIGR03591">
    <property type="entry name" value="polynuc_phos"/>
    <property type="match status" value="1"/>
</dbReference>
<dbReference type="NCBIfam" id="NF008805">
    <property type="entry name" value="PRK11824.1"/>
    <property type="match status" value="1"/>
</dbReference>
<dbReference type="PANTHER" id="PTHR11252">
    <property type="entry name" value="POLYRIBONUCLEOTIDE NUCLEOTIDYLTRANSFERASE"/>
    <property type="match status" value="1"/>
</dbReference>
<dbReference type="PANTHER" id="PTHR11252:SF0">
    <property type="entry name" value="POLYRIBONUCLEOTIDE NUCLEOTIDYLTRANSFERASE 1, MITOCHONDRIAL"/>
    <property type="match status" value="1"/>
</dbReference>
<dbReference type="Pfam" id="PF00013">
    <property type="entry name" value="KH_1"/>
    <property type="match status" value="1"/>
</dbReference>
<dbReference type="Pfam" id="PF03726">
    <property type="entry name" value="PNPase"/>
    <property type="match status" value="1"/>
</dbReference>
<dbReference type="Pfam" id="PF01138">
    <property type="entry name" value="RNase_PH"/>
    <property type="match status" value="2"/>
</dbReference>
<dbReference type="Pfam" id="PF03725">
    <property type="entry name" value="RNase_PH_C"/>
    <property type="match status" value="2"/>
</dbReference>
<dbReference type="Pfam" id="PF00575">
    <property type="entry name" value="S1"/>
    <property type="match status" value="1"/>
</dbReference>
<dbReference type="PIRSF" id="PIRSF005499">
    <property type="entry name" value="PNPase"/>
    <property type="match status" value="1"/>
</dbReference>
<dbReference type="SMART" id="SM00322">
    <property type="entry name" value="KH"/>
    <property type="match status" value="1"/>
</dbReference>
<dbReference type="SMART" id="SM00316">
    <property type="entry name" value="S1"/>
    <property type="match status" value="1"/>
</dbReference>
<dbReference type="SUPFAM" id="SSF54791">
    <property type="entry name" value="Eukaryotic type KH-domain (KH-domain type I)"/>
    <property type="match status" value="1"/>
</dbReference>
<dbReference type="SUPFAM" id="SSF50249">
    <property type="entry name" value="Nucleic acid-binding proteins"/>
    <property type="match status" value="1"/>
</dbReference>
<dbReference type="SUPFAM" id="SSF46915">
    <property type="entry name" value="Polynucleotide phosphorylase/guanosine pentaphosphate synthase (PNPase/GPSI), domain 3"/>
    <property type="match status" value="1"/>
</dbReference>
<dbReference type="SUPFAM" id="SSF55666">
    <property type="entry name" value="Ribonuclease PH domain 2-like"/>
    <property type="match status" value="2"/>
</dbReference>
<dbReference type="SUPFAM" id="SSF54211">
    <property type="entry name" value="Ribosomal protein S5 domain 2-like"/>
    <property type="match status" value="2"/>
</dbReference>
<dbReference type="PROSITE" id="PS50084">
    <property type="entry name" value="KH_TYPE_1"/>
    <property type="match status" value="1"/>
</dbReference>
<dbReference type="PROSITE" id="PS50126">
    <property type="entry name" value="S1"/>
    <property type="match status" value="1"/>
</dbReference>
<sequence>MEGIGDITVEKVETKIQETPISIETGYFAKQSNGAVIVRQGETAVFVAAVISEEAQADIDFLPLTVDYREKTYAYGKIPGGFVKREGKPTVREILVSRLIDRPIRPMFPKGFFNDVIITAMTLSADDKYDPDVLAIVGASAALHITEAPFEGPVAGVRVCRLDGEFIVNPTYEQRNRSDIDIVVAGTKDAIVMVEGGSEEVSEEVILDAILFAHEEIKKLCDLQEELRSKVGKEKITVEIDEEDERIKAELESIVRESVKEAFNILDKKERNKRIKEIYEEAIQKIEIPEEKEKKAEVIYKEIVSNIMREKVLKEKVRIDGRRPDEIRPIWIRTGLFPRIHGSAIFTRGQTQAFVATTLGAPGEEQIEESIEEGEEKKRFMLHYNFPPFSTGEARPPRAPSRREIGHGNLAERAIEPLIPDEEEFPYVIRVVSEILESNGSTSMATVCGASLSLFDAGVPMKKHVAGIAMGLLKEDDDYVILTDILGDEDHLGDMDFKVAGTRDGVTSIQMDIKIKGLSKEILQEALEQAKKARMHILDLMYKAMPQPRPELSPHAPKVITMRVLPEKIPVIIGPSGKNIKKIIDETGVKIDLDQEGLVRIYAVDGESADKAKEMIERLIMDIELGEVYMGKVTRVEDYGAFVELMPGKLSLLHVSQISPERIRSAKEKIKVGDILTVKVIDIDEMGRAKVSLKEVREGEEPKNKFLFE</sequence>